<name>LDHA_BOVIN</name>
<proteinExistence type="evidence at transcript level"/>
<evidence type="ECO:0000250" key="1"/>
<evidence type="ECO:0000250" key="2">
    <source>
        <dbReference type="UniProtKB" id="P00338"/>
    </source>
</evidence>
<evidence type="ECO:0000250" key="3">
    <source>
        <dbReference type="UniProtKB" id="P04642"/>
    </source>
</evidence>
<evidence type="ECO:0000250" key="4">
    <source>
        <dbReference type="UniProtKB" id="P06151"/>
    </source>
</evidence>
<evidence type="ECO:0000305" key="5"/>
<accession>P19858</accession>
<accession>A6H7E0</accession>
<reference key="1">
    <citation type="journal article" date="1990" name="Gene">
        <title>Primary structure of bovine lactate dehydrogenase-A isozyme and its synthesis in Escherichia coli.</title>
        <authorList>
            <person name="Ishiguro N."/>
            <person name="Osame S."/>
            <person name="Kagiya R."/>
            <person name="Ichijo S."/>
            <person name="Shinagawa M."/>
        </authorList>
    </citation>
    <scope>NUCLEOTIDE SEQUENCE [MRNA]</scope>
</reference>
<reference key="2">
    <citation type="submission" date="2007-06" db="EMBL/GenBank/DDBJ databases">
        <authorList>
            <consortium name="NIH - Mammalian Gene Collection (MGC) project"/>
        </authorList>
    </citation>
    <scope>NUCLEOTIDE SEQUENCE [LARGE SCALE MRNA]</scope>
    <source>
        <strain>Hereford</strain>
        <tissue>Fetal skin</tissue>
    </source>
</reference>
<sequence>MATLKDQLIQNLLKEEHVPQNKITIVGVGAVGMACAISILMKDLADEVALVDVMEDKLKGEMMDLQHGSLFLRTPKIVSGKDYNVTANSRLVIITAGARQQEGESRLNLVQRNVNIFKFIIPNIVKYSPNCKLLVVSNPVDILTYVAWKISGFPKNRVIGSGCNLDSARFRYLMGERLGVHPLSCHGWILGEHGDSSVPVWSGVNVAGVSLKNLHPELGTDADKEQWKAVHKQVVDSAYEVIKLKGYTSWAIGLSVADLAESIMKNLRRVHPISTMIKGLYGIKEDVFLSVPCILGQNGISDVVKVTLTHEEEACLKKSADTLWGIQKELQF</sequence>
<comment type="function">
    <text evidence="2">Interconverts simultaneously and stereospecifically pyruvate and lactate with concomitant interconversion of NADH and NAD(+).</text>
</comment>
<comment type="catalytic activity">
    <reaction evidence="2">
        <text>(S)-lactate + NAD(+) = pyruvate + NADH + H(+)</text>
        <dbReference type="Rhea" id="RHEA:23444"/>
        <dbReference type="ChEBI" id="CHEBI:15361"/>
        <dbReference type="ChEBI" id="CHEBI:15378"/>
        <dbReference type="ChEBI" id="CHEBI:16651"/>
        <dbReference type="ChEBI" id="CHEBI:57540"/>
        <dbReference type="ChEBI" id="CHEBI:57945"/>
        <dbReference type="EC" id="1.1.1.27"/>
    </reaction>
    <physiologicalReaction direction="left-to-right" evidence="2">
        <dbReference type="Rhea" id="RHEA:23445"/>
    </physiologicalReaction>
    <physiologicalReaction direction="right-to-left" evidence="2">
        <dbReference type="Rhea" id="RHEA:23446"/>
    </physiologicalReaction>
</comment>
<comment type="pathway">
    <text evidence="2">Fermentation; pyruvate fermentation to lactate; (S)-lactate from pyruvate: step 1/1.</text>
</comment>
<comment type="subunit">
    <text evidence="2">Homotetramer. Interacts with PTEN upstream reading frame protein MP31.</text>
</comment>
<comment type="subcellular location">
    <subcellularLocation>
        <location>Cytoplasm</location>
    </subcellularLocation>
</comment>
<comment type="PTM">
    <text evidence="2">ISGylated.</text>
</comment>
<comment type="similarity">
    <text evidence="5">Belongs to the LDH/MDH superfamily. LDH family.</text>
</comment>
<keyword id="KW-0007">Acetylation</keyword>
<keyword id="KW-0963">Cytoplasm</keyword>
<keyword id="KW-1017">Isopeptide bond</keyword>
<keyword id="KW-0520">NAD</keyword>
<keyword id="KW-0560">Oxidoreductase</keyword>
<keyword id="KW-0597">Phosphoprotein</keyword>
<keyword id="KW-1185">Reference proteome</keyword>
<keyword id="KW-0832">Ubl conjugation</keyword>
<feature type="initiator methionine" description="Removed" evidence="2">
    <location>
        <position position="1"/>
    </location>
</feature>
<feature type="chain" id="PRO_0000168410" description="L-lactate dehydrogenase A chain">
    <location>
        <begin position="2"/>
        <end position="332"/>
    </location>
</feature>
<feature type="active site" description="Proton acceptor" evidence="1">
    <location>
        <position position="193"/>
    </location>
</feature>
<feature type="binding site" evidence="1">
    <location>
        <begin position="29"/>
        <end position="57"/>
    </location>
    <ligand>
        <name>NAD(+)</name>
        <dbReference type="ChEBI" id="CHEBI:57540"/>
    </ligand>
</feature>
<feature type="binding site" evidence="1">
    <location>
        <position position="106"/>
    </location>
    <ligand>
        <name>substrate</name>
    </ligand>
</feature>
<feature type="binding site" evidence="1">
    <location>
        <position position="138"/>
    </location>
    <ligand>
        <name>NAD(+)</name>
        <dbReference type="ChEBI" id="CHEBI:57540"/>
    </ligand>
</feature>
<feature type="binding site" evidence="1">
    <location>
        <position position="138"/>
    </location>
    <ligand>
        <name>substrate</name>
    </ligand>
</feature>
<feature type="binding site" evidence="1">
    <location>
        <position position="169"/>
    </location>
    <ligand>
        <name>substrate</name>
    </ligand>
</feature>
<feature type="binding site" evidence="1">
    <location>
        <position position="248"/>
    </location>
    <ligand>
        <name>substrate</name>
    </ligand>
</feature>
<feature type="modified residue" description="N-acetylalanine" evidence="2">
    <location>
        <position position="2"/>
    </location>
</feature>
<feature type="modified residue" description="N6-acetyllysine; alternate" evidence="2">
    <location>
        <position position="5"/>
    </location>
</feature>
<feature type="modified residue" description="N6-succinyllysine; alternate" evidence="4">
    <location>
        <position position="5"/>
    </location>
</feature>
<feature type="modified residue" description="N6-acetyllysine" evidence="2">
    <location>
        <position position="14"/>
    </location>
</feature>
<feature type="modified residue" description="N6-acetyllysine; alternate" evidence="2">
    <location>
        <position position="57"/>
    </location>
</feature>
<feature type="modified residue" description="N6-acetyllysine" evidence="2">
    <location>
        <position position="81"/>
    </location>
</feature>
<feature type="modified residue" description="N6-acetyllysine; alternate" evidence="2">
    <location>
        <position position="118"/>
    </location>
</feature>
<feature type="modified residue" description="N6-succinyllysine; alternate" evidence="4">
    <location>
        <position position="118"/>
    </location>
</feature>
<feature type="modified residue" description="N6-acetyllysine" evidence="2">
    <location>
        <position position="126"/>
    </location>
</feature>
<feature type="modified residue" description="N6-acetyllysine" evidence="4">
    <location>
        <position position="224"/>
    </location>
</feature>
<feature type="modified residue" description="N6-acetyllysine" evidence="4">
    <location>
        <position position="232"/>
    </location>
</feature>
<feature type="modified residue" description="Phosphotyrosine" evidence="4">
    <location>
        <position position="239"/>
    </location>
</feature>
<feature type="modified residue" description="N6-acetyllysine" evidence="4">
    <location>
        <position position="243"/>
    </location>
</feature>
<feature type="modified residue" description="Phosphothreonine" evidence="3">
    <location>
        <position position="309"/>
    </location>
</feature>
<feature type="modified residue" description="N6-acetyllysine; alternate" evidence="2">
    <location>
        <position position="318"/>
    </location>
</feature>
<feature type="modified residue" description="N6-succinyllysine; alternate" evidence="4">
    <location>
        <position position="318"/>
    </location>
</feature>
<feature type="modified residue" description="Phosphothreonine" evidence="3">
    <location>
        <position position="322"/>
    </location>
</feature>
<feature type="cross-link" description="Glycyl lysine isopeptide (Lys-Gly) (interchain with G-Cter in SUMO2); alternate" evidence="2">
    <location>
        <position position="57"/>
    </location>
</feature>
<organism>
    <name type="scientific">Bos taurus</name>
    <name type="common">Bovine</name>
    <dbReference type="NCBI Taxonomy" id="9913"/>
    <lineage>
        <taxon>Eukaryota</taxon>
        <taxon>Metazoa</taxon>
        <taxon>Chordata</taxon>
        <taxon>Craniata</taxon>
        <taxon>Vertebrata</taxon>
        <taxon>Euteleostomi</taxon>
        <taxon>Mammalia</taxon>
        <taxon>Eutheria</taxon>
        <taxon>Laurasiatheria</taxon>
        <taxon>Artiodactyla</taxon>
        <taxon>Ruminantia</taxon>
        <taxon>Pecora</taxon>
        <taxon>Bovidae</taxon>
        <taxon>Bovinae</taxon>
        <taxon>Bos</taxon>
    </lineage>
</organism>
<dbReference type="EC" id="1.1.1.27" evidence="2"/>
<dbReference type="EMBL" id="D90141">
    <property type="protein sequence ID" value="BAA14169.1"/>
    <property type="molecule type" value="mRNA"/>
</dbReference>
<dbReference type="EMBL" id="D90142">
    <property type="protein sequence ID" value="BAA14170.1"/>
    <property type="molecule type" value="mRNA"/>
</dbReference>
<dbReference type="EMBL" id="D90143">
    <property type="protein sequence ID" value="BAA14171.1"/>
    <property type="molecule type" value="mRNA"/>
</dbReference>
<dbReference type="EMBL" id="BC146210">
    <property type="protein sequence ID" value="AAI46211.1"/>
    <property type="molecule type" value="mRNA"/>
</dbReference>
<dbReference type="PIR" id="JQ2222">
    <property type="entry name" value="JQ2222"/>
</dbReference>
<dbReference type="RefSeq" id="NP_776524.1">
    <property type="nucleotide sequence ID" value="NM_174099.2"/>
</dbReference>
<dbReference type="RefSeq" id="XP_005226796.1">
    <property type="nucleotide sequence ID" value="XM_005226739.4"/>
</dbReference>
<dbReference type="SMR" id="P19858"/>
<dbReference type="FunCoup" id="P19858">
    <property type="interactions" value="859"/>
</dbReference>
<dbReference type="IntAct" id="P19858">
    <property type="interactions" value="1"/>
</dbReference>
<dbReference type="STRING" id="9913.ENSBTAP00000047729"/>
<dbReference type="ChEMBL" id="CHEMBL2102"/>
<dbReference type="Allergome" id="11906">
    <property type="allergen name" value="Bos d LD"/>
</dbReference>
<dbReference type="PaxDb" id="9913-ENSBTAP00000011447"/>
<dbReference type="PeptideAtlas" id="P19858"/>
<dbReference type="GeneID" id="281274"/>
<dbReference type="KEGG" id="bta:281274"/>
<dbReference type="CTD" id="3939"/>
<dbReference type="VEuPathDB" id="HostDB:ENSBTAG00000008683"/>
<dbReference type="eggNOG" id="KOG1495">
    <property type="taxonomic scope" value="Eukaryota"/>
</dbReference>
<dbReference type="HOGENOM" id="CLU_045401_0_2_1"/>
<dbReference type="InParanoid" id="P19858"/>
<dbReference type="OMA" id="EWDLDDY"/>
<dbReference type="OrthoDB" id="5405561at2759"/>
<dbReference type="TreeFam" id="TF314963"/>
<dbReference type="Reactome" id="R-BTA-70268">
    <property type="pathway name" value="Pyruvate metabolism"/>
</dbReference>
<dbReference type="Reactome" id="R-BTA-9861718">
    <property type="pathway name" value="Regulation of pyruvate metabolism"/>
</dbReference>
<dbReference type="SABIO-RK" id="P19858"/>
<dbReference type="UniPathway" id="UPA00554">
    <property type="reaction ID" value="UER00611"/>
</dbReference>
<dbReference type="Proteomes" id="UP000009136">
    <property type="component" value="Chromosome 29"/>
</dbReference>
<dbReference type="Bgee" id="ENSBTAG00000008683">
    <property type="expression patterns" value="Expressed in biceps femoris and 105 other cell types or tissues"/>
</dbReference>
<dbReference type="GO" id="GO:0005739">
    <property type="term" value="C:mitochondrion"/>
    <property type="evidence" value="ECO:0000318"/>
    <property type="project" value="GO_Central"/>
</dbReference>
<dbReference type="GO" id="GO:0004459">
    <property type="term" value="F:L-lactate dehydrogenase activity"/>
    <property type="evidence" value="ECO:0000318"/>
    <property type="project" value="GO_Central"/>
</dbReference>
<dbReference type="GO" id="GO:0006089">
    <property type="term" value="P:lactate metabolic process"/>
    <property type="evidence" value="ECO:0000318"/>
    <property type="project" value="GO_Central"/>
</dbReference>
<dbReference type="GO" id="GO:0006090">
    <property type="term" value="P:pyruvate metabolic process"/>
    <property type="evidence" value="ECO:0000318"/>
    <property type="project" value="GO_Central"/>
</dbReference>
<dbReference type="CDD" id="cd05293">
    <property type="entry name" value="LDH_1"/>
    <property type="match status" value="1"/>
</dbReference>
<dbReference type="FunFam" id="3.40.50.720:FF:000029">
    <property type="entry name" value="L-lactate dehydrogenase A chain"/>
    <property type="match status" value="1"/>
</dbReference>
<dbReference type="FunFam" id="3.90.110.10:FF:000003">
    <property type="entry name" value="L-lactate dehydrogenase A chain"/>
    <property type="match status" value="1"/>
</dbReference>
<dbReference type="Gene3D" id="3.90.110.10">
    <property type="entry name" value="Lactate dehydrogenase/glycoside hydrolase, family 4, C-terminal"/>
    <property type="match status" value="1"/>
</dbReference>
<dbReference type="Gene3D" id="3.40.50.720">
    <property type="entry name" value="NAD(P)-binding Rossmann-like Domain"/>
    <property type="match status" value="1"/>
</dbReference>
<dbReference type="HAMAP" id="MF_00488">
    <property type="entry name" value="Lactate_dehydrog"/>
    <property type="match status" value="1"/>
</dbReference>
<dbReference type="InterPro" id="IPR001557">
    <property type="entry name" value="L-lactate/malate_DH"/>
</dbReference>
<dbReference type="InterPro" id="IPR011304">
    <property type="entry name" value="L-lactate_DH"/>
</dbReference>
<dbReference type="InterPro" id="IPR018177">
    <property type="entry name" value="L-lactate_DH_AS"/>
</dbReference>
<dbReference type="InterPro" id="IPR022383">
    <property type="entry name" value="Lactate/malate_DH_C"/>
</dbReference>
<dbReference type="InterPro" id="IPR001236">
    <property type="entry name" value="Lactate/malate_DH_N"/>
</dbReference>
<dbReference type="InterPro" id="IPR015955">
    <property type="entry name" value="Lactate_DH/Glyco_Ohase_4_C"/>
</dbReference>
<dbReference type="InterPro" id="IPR036291">
    <property type="entry name" value="NAD(P)-bd_dom_sf"/>
</dbReference>
<dbReference type="NCBIfam" id="TIGR01771">
    <property type="entry name" value="L-LDH-NAD"/>
    <property type="match status" value="1"/>
</dbReference>
<dbReference type="NCBIfam" id="NF000824">
    <property type="entry name" value="PRK00066.1"/>
    <property type="match status" value="1"/>
</dbReference>
<dbReference type="NCBIfam" id="NF004863">
    <property type="entry name" value="PRK06223.1"/>
    <property type="match status" value="1"/>
</dbReference>
<dbReference type="PANTHER" id="PTHR43128">
    <property type="entry name" value="L-2-HYDROXYCARBOXYLATE DEHYDROGENASE (NAD(P)(+))"/>
    <property type="match status" value="1"/>
</dbReference>
<dbReference type="PANTHER" id="PTHR43128:SF10">
    <property type="entry name" value="L-LACTATE DEHYDROGENASE A CHAIN"/>
    <property type="match status" value="1"/>
</dbReference>
<dbReference type="Pfam" id="PF02866">
    <property type="entry name" value="Ldh_1_C"/>
    <property type="match status" value="1"/>
</dbReference>
<dbReference type="Pfam" id="PF00056">
    <property type="entry name" value="Ldh_1_N"/>
    <property type="match status" value="1"/>
</dbReference>
<dbReference type="PIRSF" id="PIRSF000102">
    <property type="entry name" value="Lac_mal_DH"/>
    <property type="match status" value="1"/>
</dbReference>
<dbReference type="PRINTS" id="PR00086">
    <property type="entry name" value="LLDHDRGNASE"/>
</dbReference>
<dbReference type="SUPFAM" id="SSF56327">
    <property type="entry name" value="LDH C-terminal domain-like"/>
    <property type="match status" value="1"/>
</dbReference>
<dbReference type="SUPFAM" id="SSF51735">
    <property type="entry name" value="NAD(P)-binding Rossmann-fold domains"/>
    <property type="match status" value="1"/>
</dbReference>
<dbReference type="PROSITE" id="PS00064">
    <property type="entry name" value="L_LDH"/>
    <property type="match status" value="1"/>
</dbReference>
<protein>
    <recommendedName>
        <fullName>L-lactate dehydrogenase A chain</fullName>
        <shortName>LDH-A</shortName>
        <ecNumber evidence="2">1.1.1.27</ecNumber>
    </recommendedName>
    <alternativeName>
        <fullName>LDH muscle subunit</fullName>
        <shortName>LDH-M</shortName>
    </alternativeName>
</protein>
<gene>
    <name type="primary">LDHA</name>
</gene>